<organism>
    <name type="scientific">Xenopus laevis</name>
    <name type="common">African clawed frog</name>
    <dbReference type="NCBI Taxonomy" id="8355"/>
    <lineage>
        <taxon>Eukaryota</taxon>
        <taxon>Metazoa</taxon>
        <taxon>Chordata</taxon>
        <taxon>Craniata</taxon>
        <taxon>Vertebrata</taxon>
        <taxon>Euteleostomi</taxon>
        <taxon>Amphibia</taxon>
        <taxon>Batrachia</taxon>
        <taxon>Anura</taxon>
        <taxon>Pipoidea</taxon>
        <taxon>Pipidae</taxon>
        <taxon>Xenopodinae</taxon>
        <taxon>Xenopus</taxon>
        <taxon>Xenopus</taxon>
    </lineage>
</organism>
<gene>
    <name type="primary">fgfr4</name>
</gene>
<proteinExistence type="evidence at transcript level"/>
<evidence type="ECO:0000250" key="1"/>
<evidence type="ECO:0000255" key="2"/>
<evidence type="ECO:0000255" key="3">
    <source>
        <dbReference type="PROSITE-ProRule" id="PRU00114"/>
    </source>
</evidence>
<evidence type="ECO:0000255" key="4">
    <source>
        <dbReference type="PROSITE-ProRule" id="PRU00159"/>
    </source>
</evidence>
<evidence type="ECO:0000255" key="5">
    <source>
        <dbReference type="PROSITE-ProRule" id="PRU10028"/>
    </source>
</evidence>
<evidence type="ECO:0000256" key="6">
    <source>
        <dbReference type="SAM" id="MobiDB-lite"/>
    </source>
</evidence>
<accession>Q91743</accession>
<dbReference type="EC" id="2.7.10.1"/>
<dbReference type="EMBL" id="X89807">
    <property type="protein sequence ID" value="CAA61930.1"/>
    <property type="molecule type" value="mRNA"/>
</dbReference>
<dbReference type="PIR" id="JC4583">
    <property type="entry name" value="JC4583"/>
</dbReference>
<dbReference type="SMR" id="Q91743"/>
<dbReference type="GlyCosmos" id="Q91743">
    <property type="glycosylation" value="5 sites, No reported glycans"/>
</dbReference>
<dbReference type="AGR" id="Xenbase:XB-GENE-6251918"/>
<dbReference type="Xenbase" id="XB-GENE-6251918">
    <property type="gene designation" value="fgfr4.S"/>
</dbReference>
<dbReference type="Proteomes" id="UP000186698">
    <property type="component" value="Unplaced"/>
</dbReference>
<dbReference type="GO" id="GO:0005783">
    <property type="term" value="C:endoplasmic reticulum"/>
    <property type="evidence" value="ECO:0007669"/>
    <property type="project" value="UniProtKB-SubCell"/>
</dbReference>
<dbReference type="GO" id="GO:0005768">
    <property type="term" value="C:endosome"/>
    <property type="evidence" value="ECO:0007669"/>
    <property type="project" value="UniProtKB-SubCell"/>
</dbReference>
<dbReference type="GO" id="GO:0005886">
    <property type="term" value="C:plasma membrane"/>
    <property type="evidence" value="ECO:0000318"/>
    <property type="project" value="GO_Central"/>
</dbReference>
<dbReference type="GO" id="GO:0043235">
    <property type="term" value="C:receptor complex"/>
    <property type="evidence" value="ECO:0000318"/>
    <property type="project" value="GO_Central"/>
</dbReference>
<dbReference type="GO" id="GO:0005524">
    <property type="term" value="F:ATP binding"/>
    <property type="evidence" value="ECO:0007669"/>
    <property type="project" value="UniProtKB-KW"/>
</dbReference>
<dbReference type="GO" id="GO:0017134">
    <property type="term" value="F:fibroblast growth factor binding"/>
    <property type="evidence" value="ECO:0000318"/>
    <property type="project" value="GO_Central"/>
</dbReference>
<dbReference type="GO" id="GO:0005007">
    <property type="term" value="F:fibroblast growth factor receptor activity"/>
    <property type="evidence" value="ECO:0000318"/>
    <property type="project" value="GO_Central"/>
</dbReference>
<dbReference type="GO" id="GO:0008543">
    <property type="term" value="P:fibroblast growth factor receptor signaling pathway"/>
    <property type="evidence" value="ECO:0000318"/>
    <property type="project" value="GO_Central"/>
</dbReference>
<dbReference type="GO" id="GO:0008284">
    <property type="term" value="P:positive regulation of cell population proliferation"/>
    <property type="evidence" value="ECO:0000318"/>
    <property type="project" value="GO_Central"/>
</dbReference>
<dbReference type="GO" id="GO:0070374">
    <property type="term" value="P:positive regulation of ERK1 and ERK2 cascade"/>
    <property type="evidence" value="ECO:0000318"/>
    <property type="project" value="GO_Central"/>
</dbReference>
<dbReference type="GO" id="GO:0070857">
    <property type="term" value="P:regulation of bile acid biosynthetic process"/>
    <property type="evidence" value="ECO:0000318"/>
    <property type="project" value="GO_Central"/>
</dbReference>
<dbReference type="CDD" id="cd05857">
    <property type="entry name" value="IgI_2_FGFR"/>
    <property type="match status" value="1"/>
</dbReference>
<dbReference type="CDD" id="cd05099">
    <property type="entry name" value="PTKc_FGFR4"/>
    <property type="match status" value="1"/>
</dbReference>
<dbReference type="FunFam" id="1.10.510.10:FF:000007">
    <property type="entry name" value="Fibroblast growth factor receptor"/>
    <property type="match status" value="1"/>
</dbReference>
<dbReference type="FunFam" id="2.60.40.10:FF:000016">
    <property type="entry name" value="Fibroblast growth factor receptor"/>
    <property type="match status" value="1"/>
</dbReference>
<dbReference type="FunFam" id="2.60.40.10:FF:000020">
    <property type="entry name" value="Fibroblast growth factor receptor"/>
    <property type="match status" value="1"/>
</dbReference>
<dbReference type="FunFam" id="3.30.200.20:FF:000011">
    <property type="entry name" value="Fibroblast growth factor receptor"/>
    <property type="match status" value="1"/>
</dbReference>
<dbReference type="Gene3D" id="2.60.40.10">
    <property type="entry name" value="Immunoglobulins"/>
    <property type="match status" value="3"/>
</dbReference>
<dbReference type="Gene3D" id="3.30.200.20">
    <property type="entry name" value="Phosphorylase Kinase, domain 1"/>
    <property type="match status" value="1"/>
</dbReference>
<dbReference type="Gene3D" id="1.10.510.10">
    <property type="entry name" value="Transferase(Phosphotransferase) domain 1"/>
    <property type="match status" value="1"/>
</dbReference>
<dbReference type="InterPro" id="IPR016248">
    <property type="entry name" value="FGF_rcpt_fam"/>
</dbReference>
<dbReference type="InterPro" id="IPR007110">
    <property type="entry name" value="Ig-like_dom"/>
</dbReference>
<dbReference type="InterPro" id="IPR036179">
    <property type="entry name" value="Ig-like_dom_sf"/>
</dbReference>
<dbReference type="InterPro" id="IPR013783">
    <property type="entry name" value="Ig-like_fold"/>
</dbReference>
<dbReference type="InterPro" id="IPR013098">
    <property type="entry name" value="Ig_I-set"/>
</dbReference>
<dbReference type="InterPro" id="IPR003599">
    <property type="entry name" value="Ig_sub"/>
</dbReference>
<dbReference type="InterPro" id="IPR003598">
    <property type="entry name" value="Ig_sub2"/>
</dbReference>
<dbReference type="InterPro" id="IPR011009">
    <property type="entry name" value="Kinase-like_dom_sf"/>
</dbReference>
<dbReference type="InterPro" id="IPR000719">
    <property type="entry name" value="Prot_kinase_dom"/>
</dbReference>
<dbReference type="InterPro" id="IPR017441">
    <property type="entry name" value="Protein_kinase_ATP_BS"/>
</dbReference>
<dbReference type="InterPro" id="IPR050122">
    <property type="entry name" value="RTK"/>
</dbReference>
<dbReference type="InterPro" id="IPR001245">
    <property type="entry name" value="Ser-Thr/Tyr_kinase_cat_dom"/>
</dbReference>
<dbReference type="InterPro" id="IPR008266">
    <property type="entry name" value="Tyr_kinase_AS"/>
</dbReference>
<dbReference type="InterPro" id="IPR020635">
    <property type="entry name" value="Tyr_kinase_cat_dom"/>
</dbReference>
<dbReference type="PANTHER" id="PTHR24416:SF343">
    <property type="entry name" value="FIBROBLAST GROWTH FACTOR RECEPTOR 4"/>
    <property type="match status" value="1"/>
</dbReference>
<dbReference type="PANTHER" id="PTHR24416">
    <property type="entry name" value="TYROSINE-PROTEIN KINASE RECEPTOR"/>
    <property type="match status" value="1"/>
</dbReference>
<dbReference type="Pfam" id="PF07679">
    <property type="entry name" value="I-set"/>
    <property type="match status" value="2"/>
</dbReference>
<dbReference type="Pfam" id="PF07714">
    <property type="entry name" value="PK_Tyr_Ser-Thr"/>
    <property type="match status" value="1"/>
</dbReference>
<dbReference type="PIRSF" id="PIRSF000628">
    <property type="entry name" value="FGFR"/>
    <property type="match status" value="1"/>
</dbReference>
<dbReference type="PRINTS" id="PR00109">
    <property type="entry name" value="TYRKINASE"/>
</dbReference>
<dbReference type="SMART" id="SM00409">
    <property type="entry name" value="IG"/>
    <property type="match status" value="3"/>
</dbReference>
<dbReference type="SMART" id="SM00408">
    <property type="entry name" value="IGc2"/>
    <property type="match status" value="3"/>
</dbReference>
<dbReference type="SMART" id="SM00219">
    <property type="entry name" value="TyrKc"/>
    <property type="match status" value="1"/>
</dbReference>
<dbReference type="SUPFAM" id="SSF48726">
    <property type="entry name" value="Immunoglobulin"/>
    <property type="match status" value="3"/>
</dbReference>
<dbReference type="SUPFAM" id="SSF56112">
    <property type="entry name" value="Protein kinase-like (PK-like)"/>
    <property type="match status" value="1"/>
</dbReference>
<dbReference type="PROSITE" id="PS50835">
    <property type="entry name" value="IG_LIKE"/>
    <property type="match status" value="3"/>
</dbReference>
<dbReference type="PROSITE" id="PS00107">
    <property type="entry name" value="PROTEIN_KINASE_ATP"/>
    <property type="match status" value="1"/>
</dbReference>
<dbReference type="PROSITE" id="PS50011">
    <property type="entry name" value="PROTEIN_KINASE_DOM"/>
    <property type="match status" value="1"/>
</dbReference>
<dbReference type="PROSITE" id="PS00109">
    <property type="entry name" value="PROTEIN_KINASE_TYR"/>
    <property type="match status" value="1"/>
</dbReference>
<protein>
    <recommendedName>
        <fullName>Fibroblast growth factor receptor 4</fullName>
        <shortName>FGFR-4</shortName>
        <ecNumber>2.7.10.1</ecNumber>
    </recommendedName>
</protein>
<keyword id="KW-0067">ATP-binding</keyword>
<keyword id="KW-1003">Cell membrane</keyword>
<keyword id="KW-1015">Disulfide bond</keyword>
<keyword id="KW-0256">Endoplasmic reticulum</keyword>
<keyword id="KW-0967">Endosome</keyword>
<keyword id="KW-0325">Glycoprotein</keyword>
<keyword id="KW-0393">Immunoglobulin domain</keyword>
<keyword id="KW-0418">Kinase</keyword>
<keyword id="KW-0472">Membrane</keyword>
<keyword id="KW-0547">Nucleotide-binding</keyword>
<keyword id="KW-0597">Phosphoprotein</keyword>
<keyword id="KW-0675">Receptor</keyword>
<keyword id="KW-1185">Reference proteome</keyword>
<keyword id="KW-0677">Repeat</keyword>
<keyword id="KW-0732">Signal</keyword>
<keyword id="KW-0808">Transferase</keyword>
<keyword id="KW-0812">Transmembrane</keyword>
<keyword id="KW-1133">Transmembrane helix</keyword>
<keyword id="KW-0829">Tyrosine-protein kinase</keyword>
<keyword id="KW-0832">Ubl conjugation</keyword>
<comment type="function">
    <text evidence="1">Tyrosine-protein kinase that acts as a cell-surface receptor for fibroblast growth factors and plays a role in the regulation of cell proliferation, differentiation and migration, and in regulation of lipid metabolism, bile acid biosynthesis, glucose uptake, vitamin D metabolism and phosphate homeostasis. Required for normal down-regulation of the expression of CYP7A1, the rate-limiting enzyme in bile acid synthesis, in response to FGF19. Phosphorylates PLCG1 and FRS2. Ligand binding leads to the activation of several signaling cascades. Activation of PLCG1 leads to the production of the cellular signaling molecules diacylglycerol and inositol 1,4,5-trisphosphate. Phosphorylation of FRS2 triggers recruitment of GRB2, GAB1, PIK3R1 and SOS1, and mediates activation of RAS, MAPK1/ERK2, MAPK3/ERK1 and the MAP kinase signaling pathway, as well as of the AKT1 signaling pathway (By similarity).</text>
</comment>
<comment type="catalytic activity">
    <reaction evidence="5">
        <text>L-tyrosyl-[protein] + ATP = O-phospho-L-tyrosyl-[protein] + ADP + H(+)</text>
        <dbReference type="Rhea" id="RHEA:10596"/>
        <dbReference type="Rhea" id="RHEA-COMP:10136"/>
        <dbReference type="Rhea" id="RHEA-COMP:20101"/>
        <dbReference type="ChEBI" id="CHEBI:15378"/>
        <dbReference type="ChEBI" id="CHEBI:30616"/>
        <dbReference type="ChEBI" id="CHEBI:46858"/>
        <dbReference type="ChEBI" id="CHEBI:61978"/>
        <dbReference type="ChEBI" id="CHEBI:456216"/>
        <dbReference type="EC" id="2.7.10.1"/>
    </reaction>
</comment>
<comment type="activity regulation">
    <text evidence="1">Present in an inactive conformation in the absence of bound ligand. Ligand binding leads to dimerization and activation by autophosphorylation on tyrosine residues (By similarity).</text>
</comment>
<comment type="subcellular location">
    <subcellularLocation>
        <location evidence="1">Cell membrane</location>
        <topology evidence="1">Single-pass type I membrane protein</topology>
    </subcellularLocation>
    <subcellularLocation>
        <location evidence="1">Endosome</location>
    </subcellularLocation>
    <subcellularLocation>
        <location evidence="1">Endoplasmic reticulum</location>
    </subcellularLocation>
    <text evidence="1">Internalized from the cell membrane to recycling endosomes, and from there back to the cell membrane.</text>
</comment>
<comment type="PTM">
    <text evidence="1">Ubiquitinated. Subject to proteasomal degradation when not fully glycosylated (By similarity).</text>
</comment>
<comment type="PTM">
    <text evidence="1">Autophosphorylated. Binding of FGF family members together with heparan sulfate proteoglycan or heparin promotes receptor dimerization and autophosphorylation on tyrosine residues. Autophosphorylation occurs in trans between the two FGFR molecules present in the dimer (By similarity).</text>
</comment>
<comment type="similarity">
    <text evidence="4">Belongs to the protein kinase superfamily. Tyr protein kinase family. Fibroblast growth factor receptor subfamily.</text>
</comment>
<reference key="1">
    <citation type="journal article" date="1996" name="Biochem. Biophys. Res. Commun.">
        <title>Early regionalized expression of a novel Xenopus fibroblast growth factor receptor in neuroepithlium.</title>
        <authorList>
            <person name="Riou J.F."/>
            <person name="Clavilier L."/>
            <person name="Boucaut J.-C."/>
        </authorList>
    </citation>
    <scope>NUCLEOTIDE SEQUENCE [MRNA]</scope>
</reference>
<name>FGFR4_XENLA</name>
<sequence>MSGSIRRSYTAMQNFPRFLLGVLFVATLSSCRPRLSEDEANWKGQTETSEVEEHLLLDPGNALRLFCDTNQSSSINWYREQERLLSGGKIRMVGTVLEVSDVTYEDSGLYICVVRGTGKILRRFSISVVDSLASGDEEEEEEDDDDEDGRREDTTADINEEPVYFFQAPYWTQPSRMDKKLHAVPAGNTVKFRCPAGGSPLPTIRWSLKNGREFRGEHRIGGIQIRHQHWSLVMESVVPSDRGNYTCVVENRVGSLTYTYFLDVLERSSHRPILQAGLPANTTARVGSDVEFYCKVYSDAQPHIQWLKHIEVNGSHFGPDDFPYVQVLKTADINPSDVEVLHLRNITMEDAGEYTCLAGNSIGLSHQSAWLTVLPNEDFLEQAEPAESRYMDIIIYTSGFLAVAMAIMIVILCRMQTPHSKQTLQTPTVHKLAKFPLIRQFSLESSSSGKSSAPLIRITRLSSSCAPMLPGVMEVELPLDAKWEFPRDRLVLGKPLGEGCFGQVVRAEGYGIEKDRPEKPVTVAVKMLKDNGTDKDLSDLISEMELMKVIGKHKNIINLLGVCTQEGPLFVIVEYASKGNLREFLRARRPPTPEDAFDITKVPEELLSFKDLVSCAYQVARGMEYLESKRCIHRDLAARNVLVAEDNVMKIADFGLARGVHDIDYYKKTSNGRLPVKWMAPEALFDRVYTHQSDIWSFGVLTWEIFTLGGSPYPVIPYEELFKLLREGHRMDKPSNCTHELYMLMRECWHAVPTQRPTFKQLEHLDRILTAVSEEYLDLSMPFEQYSPSCEDSASTCSSSDDSVFAPDPVPSSPCVFNYHNIHSQLGT</sequence>
<feature type="signal peptide" evidence="2">
    <location>
        <begin position="1"/>
        <end position="31"/>
    </location>
</feature>
<feature type="chain" id="PRO_0000249209" description="Fibroblast growth factor receptor 4">
    <location>
        <begin position="32"/>
        <end position="828"/>
    </location>
</feature>
<feature type="topological domain" description="Extracellular" evidence="2">
    <location>
        <begin position="32"/>
        <end position="392"/>
    </location>
</feature>
<feature type="transmembrane region" description="Helical" evidence="2">
    <location>
        <begin position="393"/>
        <end position="413"/>
    </location>
</feature>
<feature type="topological domain" description="Cytoplasmic" evidence="2">
    <location>
        <begin position="414"/>
        <end position="828"/>
    </location>
</feature>
<feature type="domain" description="Ig-like C2-type 1">
    <location>
        <begin position="33"/>
        <end position="127"/>
    </location>
</feature>
<feature type="domain" description="Ig-like C2-type 2">
    <location>
        <begin position="169"/>
        <end position="259"/>
    </location>
</feature>
<feature type="domain" description="Ig-like C2-type 3">
    <location>
        <begin position="272"/>
        <end position="372"/>
    </location>
</feature>
<feature type="domain" description="Protein kinase" evidence="4">
    <location>
        <begin position="490"/>
        <end position="777"/>
    </location>
</feature>
<feature type="region of interest" description="Disordered" evidence="6">
    <location>
        <begin position="132"/>
        <end position="156"/>
    </location>
</feature>
<feature type="compositionally biased region" description="Acidic residues" evidence="6">
    <location>
        <begin position="135"/>
        <end position="147"/>
    </location>
</feature>
<feature type="active site" description="Proton acceptor" evidence="4 5">
    <location>
        <position position="635"/>
    </location>
</feature>
<feature type="binding site" evidence="4">
    <location>
        <begin position="496"/>
        <end position="504"/>
    </location>
    <ligand>
        <name>ATP</name>
        <dbReference type="ChEBI" id="CHEBI:30616"/>
    </ligand>
</feature>
<feature type="binding site" evidence="4">
    <location>
        <position position="526"/>
    </location>
    <ligand>
        <name>ATP</name>
        <dbReference type="ChEBI" id="CHEBI:30616"/>
    </ligand>
</feature>
<feature type="modified residue" description="Phosphotyrosine; by autocatalysis" evidence="1">
    <location>
        <position position="665"/>
    </location>
</feature>
<feature type="modified residue" description="Phosphotyrosine; by autocatalysis" evidence="1">
    <location>
        <position position="666"/>
    </location>
</feature>
<feature type="modified residue" description="Phosphotyrosine; by autocatalysis" evidence="1">
    <location>
        <position position="776"/>
    </location>
</feature>
<feature type="glycosylation site" description="N-linked (GlcNAc...) asparagine" evidence="2">
    <location>
        <position position="70"/>
    </location>
</feature>
<feature type="glycosylation site" description="N-linked (GlcNAc...) asparagine" evidence="2">
    <location>
        <position position="244"/>
    </location>
</feature>
<feature type="glycosylation site" description="N-linked (GlcNAc...) asparagine" evidence="2">
    <location>
        <position position="281"/>
    </location>
</feature>
<feature type="glycosylation site" description="N-linked (GlcNAc...) asparagine" evidence="2">
    <location>
        <position position="313"/>
    </location>
</feature>
<feature type="glycosylation site" description="N-linked (GlcNAc...) asparagine" evidence="2">
    <location>
        <position position="345"/>
    </location>
</feature>
<feature type="disulfide bond" evidence="3">
    <location>
        <begin position="67"/>
        <end position="112"/>
    </location>
</feature>
<feature type="disulfide bond" evidence="3">
    <location>
        <begin position="194"/>
        <end position="247"/>
    </location>
</feature>
<feature type="disulfide bond" evidence="3">
    <location>
        <begin position="294"/>
        <end position="356"/>
    </location>
</feature>